<proteinExistence type="predicted"/>
<gene>
    <name type="primary">areA</name>
</gene>
<evidence type="ECO:0000255" key="1">
    <source>
        <dbReference type="PROSITE-ProRule" id="PRU00094"/>
    </source>
</evidence>
<evidence type="ECO:0000256" key="2">
    <source>
        <dbReference type="SAM" id="MobiDB-lite"/>
    </source>
</evidence>
<feature type="chain" id="PRO_0000083463" description="Nitrogen regulatory protein areA">
    <location>
        <begin position="1"/>
        <end position="882"/>
    </location>
</feature>
<feature type="zinc finger region" description="GATA-type" evidence="1">
    <location>
        <begin position="676"/>
        <end position="700"/>
    </location>
</feature>
<feature type="region of interest" description="Disordered" evidence="2">
    <location>
        <begin position="1"/>
        <end position="75"/>
    </location>
</feature>
<feature type="region of interest" description="Disordered" evidence="2">
    <location>
        <begin position="139"/>
        <end position="191"/>
    </location>
</feature>
<feature type="region of interest" description="Disordered" evidence="2">
    <location>
        <begin position="228"/>
        <end position="257"/>
    </location>
</feature>
<feature type="region of interest" description="Disordered" evidence="2">
    <location>
        <begin position="325"/>
        <end position="344"/>
    </location>
</feature>
<feature type="region of interest" description="Disordered" evidence="2">
    <location>
        <begin position="394"/>
        <end position="422"/>
    </location>
</feature>
<feature type="region of interest" description="Disordered" evidence="2">
    <location>
        <begin position="461"/>
        <end position="545"/>
    </location>
</feature>
<feature type="region of interest" description="Disordered" evidence="2">
    <location>
        <begin position="579"/>
        <end position="675"/>
    </location>
</feature>
<feature type="region of interest" description="Disordered" evidence="2">
    <location>
        <begin position="723"/>
        <end position="871"/>
    </location>
</feature>
<feature type="compositionally biased region" description="Gly residues" evidence="2">
    <location>
        <begin position="1"/>
        <end position="13"/>
    </location>
</feature>
<feature type="compositionally biased region" description="Low complexity" evidence="2">
    <location>
        <begin position="48"/>
        <end position="59"/>
    </location>
</feature>
<feature type="compositionally biased region" description="Polar residues" evidence="2">
    <location>
        <begin position="156"/>
        <end position="169"/>
    </location>
</feature>
<feature type="compositionally biased region" description="Polar residues" evidence="2">
    <location>
        <begin position="177"/>
        <end position="191"/>
    </location>
</feature>
<feature type="compositionally biased region" description="Basic residues" evidence="2">
    <location>
        <begin position="325"/>
        <end position="334"/>
    </location>
</feature>
<feature type="compositionally biased region" description="Polar residues" evidence="2">
    <location>
        <begin position="394"/>
        <end position="413"/>
    </location>
</feature>
<feature type="compositionally biased region" description="Polar residues" evidence="2">
    <location>
        <begin position="492"/>
        <end position="503"/>
    </location>
</feature>
<feature type="compositionally biased region" description="Basic and acidic residues" evidence="2">
    <location>
        <begin position="604"/>
        <end position="613"/>
    </location>
</feature>
<feature type="compositionally biased region" description="Polar residues" evidence="2">
    <location>
        <begin position="617"/>
        <end position="642"/>
    </location>
</feature>
<feature type="compositionally biased region" description="Low complexity" evidence="2">
    <location>
        <begin position="745"/>
        <end position="759"/>
    </location>
</feature>
<feature type="compositionally biased region" description="Polar residues" evidence="2">
    <location>
        <begin position="795"/>
        <end position="811"/>
    </location>
</feature>
<feature type="compositionally biased region" description="Low complexity" evidence="2">
    <location>
        <begin position="848"/>
        <end position="861"/>
    </location>
</feature>
<name>AREA_ASPNG</name>
<keyword id="KW-0010">Activator</keyword>
<keyword id="KW-0238">DNA-binding</keyword>
<keyword id="KW-0479">Metal-binding</keyword>
<keyword id="KW-0534">Nitrate assimilation</keyword>
<keyword id="KW-0539">Nucleus</keyword>
<keyword id="KW-0804">Transcription</keyword>
<keyword id="KW-0805">Transcription regulation</keyword>
<keyword id="KW-0862">Zinc</keyword>
<keyword id="KW-0863">Zinc-finger</keyword>
<dbReference type="EMBL" id="X81998">
    <property type="protein sequence ID" value="CAA57524.1"/>
    <property type="molecule type" value="Genomic_DNA"/>
</dbReference>
<dbReference type="PaxDb" id="5061-CADANGAP00010130"/>
<dbReference type="VEuPathDB" id="FungiDB:An12g08960"/>
<dbReference type="VEuPathDB" id="FungiDB:ASPNIDRAFT2_1209176"/>
<dbReference type="VEuPathDB" id="FungiDB:ATCC64974_34540"/>
<dbReference type="VEuPathDB" id="FungiDB:M747DRAFT_340105"/>
<dbReference type="eggNOG" id="KOG1601">
    <property type="taxonomic scope" value="Eukaryota"/>
</dbReference>
<dbReference type="GO" id="GO:0005634">
    <property type="term" value="C:nucleus"/>
    <property type="evidence" value="ECO:0007669"/>
    <property type="project" value="UniProtKB-SubCell"/>
</dbReference>
<dbReference type="GO" id="GO:0000981">
    <property type="term" value="F:DNA-binding transcription factor activity, RNA polymerase II-specific"/>
    <property type="evidence" value="ECO:0007669"/>
    <property type="project" value="TreeGrafter"/>
</dbReference>
<dbReference type="GO" id="GO:0000978">
    <property type="term" value="F:RNA polymerase II cis-regulatory region sequence-specific DNA binding"/>
    <property type="evidence" value="ECO:0007669"/>
    <property type="project" value="TreeGrafter"/>
</dbReference>
<dbReference type="GO" id="GO:0008270">
    <property type="term" value="F:zinc ion binding"/>
    <property type="evidence" value="ECO:0007669"/>
    <property type="project" value="UniProtKB-KW"/>
</dbReference>
<dbReference type="GO" id="GO:0000122">
    <property type="term" value="P:negative regulation of transcription by RNA polymerase II"/>
    <property type="evidence" value="ECO:0007669"/>
    <property type="project" value="TreeGrafter"/>
</dbReference>
<dbReference type="GO" id="GO:0042128">
    <property type="term" value="P:nitrate assimilation"/>
    <property type="evidence" value="ECO:0007669"/>
    <property type="project" value="UniProtKB-KW"/>
</dbReference>
<dbReference type="GO" id="GO:0045944">
    <property type="term" value="P:positive regulation of transcription by RNA polymerase II"/>
    <property type="evidence" value="ECO:0007669"/>
    <property type="project" value="TreeGrafter"/>
</dbReference>
<dbReference type="CDD" id="cd00202">
    <property type="entry name" value="ZnF_GATA"/>
    <property type="match status" value="1"/>
</dbReference>
<dbReference type="FunFam" id="3.30.50.10:FF:000007">
    <property type="entry name" value="Nitrogen regulatory AreA, N-terminal"/>
    <property type="match status" value="1"/>
</dbReference>
<dbReference type="Gene3D" id="3.30.50.10">
    <property type="entry name" value="Erythroid Transcription Factor GATA-1, subunit A"/>
    <property type="match status" value="1"/>
</dbReference>
<dbReference type="InterPro" id="IPR013860">
    <property type="entry name" value="AreA_GATA"/>
</dbReference>
<dbReference type="InterPro" id="IPR011420">
    <property type="entry name" value="AreA_N"/>
</dbReference>
<dbReference type="InterPro" id="IPR039355">
    <property type="entry name" value="Transcription_factor_GATA"/>
</dbReference>
<dbReference type="InterPro" id="IPR000679">
    <property type="entry name" value="Znf_GATA"/>
</dbReference>
<dbReference type="InterPro" id="IPR013088">
    <property type="entry name" value="Znf_NHR/GATA"/>
</dbReference>
<dbReference type="PANTHER" id="PTHR10071:SF281">
    <property type="entry name" value="BOX A-BINDING FACTOR-RELATED"/>
    <property type="match status" value="1"/>
</dbReference>
<dbReference type="PANTHER" id="PTHR10071">
    <property type="entry name" value="TRANSCRIPTION FACTOR GATA FAMILY MEMBER"/>
    <property type="match status" value="1"/>
</dbReference>
<dbReference type="Pfam" id="PF07573">
    <property type="entry name" value="AreA_N"/>
    <property type="match status" value="1"/>
</dbReference>
<dbReference type="Pfam" id="PF00320">
    <property type="entry name" value="GATA"/>
    <property type="match status" value="1"/>
</dbReference>
<dbReference type="Pfam" id="PF08550">
    <property type="entry name" value="GATA_AreA"/>
    <property type="match status" value="1"/>
</dbReference>
<dbReference type="PRINTS" id="PR00619">
    <property type="entry name" value="GATAZNFINGER"/>
</dbReference>
<dbReference type="SMART" id="SM00401">
    <property type="entry name" value="ZnF_GATA"/>
    <property type="match status" value="1"/>
</dbReference>
<dbReference type="SUPFAM" id="SSF57716">
    <property type="entry name" value="Glucocorticoid receptor-like (DNA-binding domain)"/>
    <property type="match status" value="1"/>
</dbReference>
<dbReference type="PROSITE" id="PS00344">
    <property type="entry name" value="GATA_ZN_FINGER_1"/>
    <property type="match status" value="1"/>
</dbReference>
<dbReference type="PROSITE" id="PS50114">
    <property type="entry name" value="GATA_ZN_FINGER_2"/>
    <property type="match status" value="1"/>
</dbReference>
<comment type="function">
    <text>Major nitrogen regulatory protein. Positively acting regulatory gene of nitrogen metabolite repression.</text>
</comment>
<comment type="subcellular location">
    <subcellularLocation>
        <location>Nucleus</location>
    </subcellularLocation>
</comment>
<organism>
    <name type="scientific">Aspergillus niger</name>
    <dbReference type="NCBI Taxonomy" id="5061"/>
    <lineage>
        <taxon>Eukaryota</taxon>
        <taxon>Fungi</taxon>
        <taxon>Dikarya</taxon>
        <taxon>Ascomycota</taxon>
        <taxon>Pezizomycotina</taxon>
        <taxon>Eurotiomycetes</taxon>
        <taxon>Eurotiomycetidae</taxon>
        <taxon>Eurotiales</taxon>
        <taxon>Aspergillaceae</taxon>
        <taxon>Aspergillus</taxon>
        <taxon>Aspergillus subgen. Circumdati</taxon>
    </lineage>
</organism>
<reference key="1">
    <citation type="journal article" date="1998" name="Biochim. Biophys. Acta">
        <title>Identification, cloning and sequence of the Aspergillus niger areA wide domain regulatory gene controlling nitrogen utilisation.</title>
        <authorList>
            <person name="MacCabe A.P."/>
            <person name="Vanhanen S.A.S."/>
            <person name="Sollewijn Gelpke M."/>
            <person name="Van de Vondervoort P."/>
            <person name="Arst H.N. Jr."/>
            <person name="Visser J."/>
        </authorList>
    </citation>
    <scope>NUCLEOTIDE SEQUENCE [GENOMIC DNA]</scope>
    <source>
        <strain>ATCC 9089 / N402</strain>
    </source>
</reference>
<protein>
    <recommendedName>
        <fullName>Nitrogen regulatory protein areA</fullName>
    </recommendedName>
</protein>
<accession>O13412</accession>
<sequence>MSGLTLGGGGSGGVRPTQPAAFASLQDSADADRRSSTTTSNNPPPLPSDFSQLSDDFSFGSPISPPHSSNAPDSLLHDSLFPEWKVGTPRAGFDGPDEMQRKDPLATQIWKLYSRTKAQLPNQERMENLTWRMMAMSLKRKERERAQQSRSASARNSVSGPSGIAQLTSPPLIASRPTRQNPSLSTDLTSDPMNLERIFIVPFESPSDHPSPQLTKGEATSAAIPIKSRKDQVAESTPVPASFPHPPQDQRKNSEFGYVPRRVRKTSIDDRQFFNLQVPTRKRPAEASPQVPPVSNAMLAQDPDLSGGVPDYALDASSAFALHHNNHSSSHHNHTSPGMPFGLDTYGLGEDPILTSAGPYQTQFTFSPTESPMTSGNPFANLYAHTPVASSLNSTDFFSPPQSGYQSTASTPQPAYDGEHSMFFDMPSVDARTQRRVPNYVSHRTSNLSASLQPRYMFNQNQDQSHHTGNHSSSMHSPGYPIPQPQHVDPTQVLNPNDFSTGASHAAMFSFGADSDNEDDDGNQFSDRAGLTMPGDLDDGADMNGGMQWDAQFPGSFHSLPGFTAQHRKHVTIGPTDMMDTPSEWAQSGSLGRTHGSAASVSEVRNREQDPRRQKIARTTSTPNTAQLLRQSMNANTSHTSPNTPPESGLSSAVPSRPASPGGSKNGEQSSGPTTCTNCFTQTTPLWRRNPEGQPLCNACGLFLKLHGVVRPLSLKTDVIKKRNRSSANSLAVGTSRASKKSARKNSVQQTTVTTPTSSRAQSGATSFGVRRPRAGAVRRAEPLVPIAAAPPKANPTTSSPGQSRGTSSVQMAPKRQRRLEKATDAEAGGDEASKSSTASGGRSKVVALAPAMPPAAANPANHSIAGGQGASQEWEWLTMSL</sequence>